<name>PTGA_BUCBP</name>
<evidence type="ECO:0000250" key="1">
    <source>
        <dbReference type="UniProtKB" id="P69783"/>
    </source>
</evidence>
<evidence type="ECO:0000255" key="2">
    <source>
        <dbReference type="PROSITE-ProRule" id="PRU00416"/>
    </source>
</evidence>
<evidence type="ECO:0000305" key="3"/>
<gene>
    <name type="primary">crr</name>
    <name type="ordered locus">bbp_059</name>
</gene>
<keyword id="KW-0963">Cytoplasm</keyword>
<keyword id="KW-0418">Kinase</keyword>
<keyword id="KW-0479">Metal-binding</keyword>
<keyword id="KW-0597">Phosphoprotein</keyword>
<keyword id="KW-0598">Phosphotransferase system</keyword>
<keyword id="KW-1185">Reference proteome</keyword>
<keyword id="KW-0762">Sugar transport</keyword>
<keyword id="KW-0808">Transferase</keyword>
<keyword id="KW-0813">Transport</keyword>
<keyword id="KW-0862">Zinc</keyword>
<accession>Q89B05</accession>
<protein>
    <recommendedName>
        <fullName evidence="1">PTS system glucose-specific EIIA component</fullName>
    </recommendedName>
    <alternativeName>
        <fullName evidence="1">EIIA-Glc</fullName>
    </alternativeName>
    <alternativeName>
        <fullName evidence="1">EIII-Glc</fullName>
    </alternativeName>
    <alternativeName>
        <fullName evidence="1">Glucose-specific phosphotransferase enzyme IIA component</fullName>
    </alternativeName>
</protein>
<organism>
    <name type="scientific">Buchnera aphidicola subsp. Baizongia pistaciae (strain Bp)</name>
    <dbReference type="NCBI Taxonomy" id="224915"/>
    <lineage>
        <taxon>Bacteria</taxon>
        <taxon>Pseudomonadati</taxon>
        <taxon>Pseudomonadota</taxon>
        <taxon>Gammaproteobacteria</taxon>
        <taxon>Enterobacterales</taxon>
        <taxon>Erwiniaceae</taxon>
        <taxon>Buchnera</taxon>
    </lineage>
</organism>
<dbReference type="EMBL" id="AE016826">
    <property type="protein sequence ID" value="AAO26798.1"/>
    <property type="molecule type" value="Genomic_DNA"/>
</dbReference>
<dbReference type="RefSeq" id="WP_011091199.1">
    <property type="nucleotide sequence ID" value="NC_004545.1"/>
</dbReference>
<dbReference type="SMR" id="Q89B05"/>
<dbReference type="STRING" id="224915.bbp_059"/>
<dbReference type="KEGG" id="bab:bbp_059"/>
<dbReference type="eggNOG" id="COG2190">
    <property type="taxonomic scope" value="Bacteria"/>
</dbReference>
<dbReference type="HOGENOM" id="CLU_012312_5_1_6"/>
<dbReference type="OrthoDB" id="7571469at2"/>
<dbReference type="Proteomes" id="UP000000601">
    <property type="component" value="Chromosome"/>
</dbReference>
<dbReference type="GO" id="GO:0005737">
    <property type="term" value="C:cytoplasm"/>
    <property type="evidence" value="ECO:0007669"/>
    <property type="project" value="UniProtKB-SubCell"/>
</dbReference>
<dbReference type="GO" id="GO:0016301">
    <property type="term" value="F:kinase activity"/>
    <property type="evidence" value="ECO:0007669"/>
    <property type="project" value="UniProtKB-KW"/>
</dbReference>
<dbReference type="GO" id="GO:0046872">
    <property type="term" value="F:metal ion binding"/>
    <property type="evidence" value="ECO:0007669"/>
    <property type="project" value="UniProtKB-KW"/>
</dbReference>
<dbReference type="GO" id="GO:0009401">
    <property type="term" value="P:phosphoenolpyruvate-dependent sugar phosphotransferase system"/>
    <property type="evidence" value="ECO:0007669"/>
    <property type="project" value="UniProtKB-KW"/>
</dbReference>
<dbReference type="FunFam" id="2.70.70.10:FF:000001">
    <property type="entry name" value="PTS system glucose-specific IIA component"/>
    <property type="match status" value="1"/>
</dbReference>
<dbReference type="Gene3D" id="2.70.70.10">
    <property type="entry name" value="Glucose Permease (Domain IIA)"/>
    <property type="match status" value="1"/>
</dbReference>
<dbReference type="InterPro" id="IPR011055">
    <property type="entry name" value="Dup_hybrid_motif"/>
</dbReference>
<dbReference type="InterPro" id="IPR001127">
    <property type="entry name" value="PTS_EIIA_1_perm"/>
</dbReference>
<dbReference type="InterPro" id="IPR050890">
    <property type="entry name" value="PTS_EIIA_component"/>
</dbReference>
<dbReference type="NCBIfam" id="NF006962">
    <property type="entry name" value="PRK09439.1"/>
    <property type="match status" value="1"/>
</dbReference>
<dbReference type="NCBIfam" id="TIGR00830">
    <property type="entry name" value="PTBA"/>
    <property type="match status" value="1"/>
</dbReference>
<dbReference type="PANTHER" id="PTHR45008">
    <property type="entry name" value="PTS SYSTEM GLUCOSE-SPECIFIC EIIA COMPONENT"/>
    <property type="match status" value="1"/>
</dbReference>
<dbReference type="PANTHER" id="PTHR45008:SF1">
    <property type="entry name" value="PTS SYSTEM GLUCOSE-SPECIFIC EIIA COMPONENT"/>
    <property type="match status" value="1"/>
</dbReference>
<dbReference type="Pfam" id="PF00358">
    <property type="entry name" value="PTS_EIIA_1"/>
    <property type="match status" value="1"/>
</dbReference>
<dbReference type="SUPFAM" id="SSF51261">
    <property type="entry name" value="Duplicated hybrid motif"/>
    <property type="match status" value="1"/>
</dbReference>
<dbReference type="PROSITE" id="PS51093">
    <property type="entry name" value="PTS_EIIA_TYPE_1"/>
    <property type="match status" value="1"/>
</dbReference>
<proteinExistence type="inferred from homology"/>
<reference key="1">
    <citation type="journal article" date="2003" name="Proc. Natl. Acad. Sci. U.S.A.">
        <title>Reductive genome evolution in Buchnera aphidicola.</title>
        <authorList>
            <person name="van Ham R.C.H.J."/>
            <person name="Kamerbeek J."/>
            <person name="Palacios C."/>
            <person name="Rausell C."/>
            <person name="Abascal F."/>
            <person name="Bastolla U."/>
            <person name="Fernandez J.M."/>
            <person name="Jimenez L."/>
            <person name="Postigo M."/>
            <person name="Silva F.J."/>
            <person name="Tamames J."/>
            <person name="Viguera E."/>
            <person name="Latorre A."/>
            <person name="Valencia A."/>
            <person name="Moran F."/>
            <person name="Moya A."/>
        </authorList>
    </citation>
    <scope>NUCLEOTIDE SEQUENCE [LARGE SCALE GENOMIC DNA]</scope>
    <source>
        <strain>Bp</strain>
    </source>
</reference>
<feature type="chain" id="PRO_0000186540" description="PTS system glucose-specific EIIA component">
    <location>
        <begin position="1"/>
        <end position="168"/>
    </location>
</feature>
<feature type="domain" description="PTS EIIA type-1" evidence="2">
    <location>
        <begin position="38"/>
        <end position="142"/>
    </location>
</feature>
<feature type="active site" description="Tele-phosphohistidine intermediate; for EIIA activity" evidence="1 2">
    <location>
        <position position="90"/>
    </location>
</feature>
<feature type="binding site" evidence="1 3">
    <location>
        <position position="75"/>
    </location>
    <ligand>
        <name>Zn(2+)</name>
        <dbReference type="ChEBI" id="CHEBI:29105"/>
    </ligand>
</feature>
<feature type="binding site" evidence="1 3">
    <location>
        <position position="90"/>
    </location>
    <ligand>
        <name>Zn(2+)</name>
        <dbReference type="ChEBI" id="CHEBI:29105"/>
    </ligand>
</feature>
<feature type="site" description="Important for phospho-donor activity" evidence="1">
    <location>
        <position position="75"/>
    </location>
</feature>
<feature type="modified residue" description="Phosphohistidine; by HPr" evidence="1">
    <location>
        <position position="90"/>
    </location>
</feature>
<sequence>MKFFSNFFKNKNNLSSHNVINIFAPISGDIVEIESVPDEVFSNKIVGDGIAISPNSNILLAPINGTIGRIFETLHAFSIKSDDDIELFVHFGIDTVKLKGRGFKKISEENIAVKIGDPIIFIDLPFLKKLVKSTLTPVIISNIDKFKKITKNTGSVIAGKTVIFSVQK</sequence>
<comment type="function">
    <text evidence="1">The phosphoenolpyruvate-dependent sugar phosphotransferase system (sugar PTS), a major carbohydrate active transport system, catalyzes the phosphorylation of incoming sugar substrates concomitantly with their translocation across the cell membrane. The enzyme II complex composed of PtsG and Crr is involved in glucose transport.</text>
</comment>
<comment type="cofactor">
    <cofactor evidence="1">
        <name>Zn(2+)</name>
        <dbReference type="ChEBI" id="CHEBI:29105"/>
    </cofactor>
</comment>
<comment type="subcellular location">
    <subcellularLocation>
        <location evidence="3">Cytoplasm</location>
    </subcellularLocation>
</comment>
<comment type="domain">
    <text evidence="2">The EIIA domain is phosphorylated by phospho-HPr on a histidyl residue. Then, it transfers the phosphoryl group to the EIIB domain.</text>
</comment>